<protein>
    <recommendedName>
        <fullName evidence="5">K(+)/H(+) antiporter modulator KhtS</fullName>
    </recommendedName>
</protein>
<proteinExistence type="evidence at transcript level"/>
<keyword id="KW-1003">Cell membrane</keyword>
<keyword id="KW-0472">Membrane</keyword>
<keyword id="KW-1185">Reference proteome</keyword>
<feature type="chain" id="PRO_0000049551" description="K(+)/H(+) antiporter modulator KhtS">
    <location>
        <begin position="1"/>
        <end position="112"/>
    </location>
</feature>
<feature type="region of interest" description="Disordered" evidence="1">
    <location>
        <begin position="42"/>
        <end position="64"/>
    </location>
</feature>
<feature type="compositionally biased region" description="Polar residues" evidence="1">
    <location>
        <begin position="47"/>
        <end position="60"/>
    </location>
</feature>
<name>KHTS_BACSU</name>
<organism>
    <name type="scientific">Bacillus subtilis (strain 168)</name>
    <dbReference type="NCBI Taxonomy" id="224308"/>
    <lineage>
        <taxon>Bacteria</taxon>
        <taxon>Bacillati</taxon>
        <taxon>Bacillota</taxon>
        <taxon>Bacilli</taxon>
        <taxon>Bacillales</taxon>
        <taxon>Bacillaceae</taxon>
        <taxon>Bacillus</taxon>
    </lineage>
</organism>
<sequence length="112" mass="12778">MRREERNMDKLLISFLLSLFMVYFPPSDVVLPSQFEASTDSYVPMSSYPQETQSAKTPSPGSMHPAELIKEYSPLAQSVRQLSVKPLDEPLINRLEKALAVPVKYQSNYLRI</sequence>
<accession>O07534</accession>
<evidence type="ECO:0000256" key="1">
    <source>
        <dbReference type="SAM" id="MobiDB-lite"/>
    </source>
</evidence>
<evidence type="ECO:0000269" key="2">
    <source>
    </source>
</evidence>
<evidence type="ECO:0000269" key="3">
    <source>
    </source>
</evidence>
<evidence type="ECO:0000303" key="4">
    <source>
    </source>
</evidence>
<evidence type="ECO:0000305" key="5"/>
<evidence type="ECO:0000305" key="6">
    <source>
    </source>
</evidence>
<gene>
    <name evidence="4" type="primary">khtS</name>
    <name type="synonym">yhaS</name>
    <name type="ordered locus">BSU09870</name>
</gene>
<comment type="function">
    <text evidence="2 3">Modulates the activity of the potassium/proton antiporter KhtU (PubMed:14987767). Involved in protection of the cell from methylglyoxal, a toxic by-product of glycolysis (PubMed:24330391).</text>
</comment>
<comment type="subcellular location">
    <subcellularLocation>
        <location evidence="6">Cell membrane</location>
        <topology evidence="6">Peripheral membrane protein</topology>
        <orientation evidence="6">Cytoplasmic side</orientation>
    </subcellularLocation>
</comment>
<comment type="induction">
    <text evidence="2">Part of the khtSTU operon. Induced by salt stress at alkaline pH.</text>
</comment>
<reference key="1">
    <citation type="journal article" date="1998" name="Microbiology">
        <title>The 172 kb prkA-addAB region from 83 degrees to 97 degrees of the Bacillus subtilis chromosome contains several dysfunctional genes, the glyB marker, many genes encoding transporter proteins, and the ubiquitous hit gene.</title>
        <authorList>
            <person name="Noback M.A."/>
            <person name="Holsappel S."/>
            <person name="Kiewiet R."/>
            <person name="Terpstra P."/>
            <person name="Wambutt R."/>
            <person name="Wedler H."/>
            <person name="Venema G."/>
            <person name="Bron S."/>
        </authorList>
    </citation>
    <scope>NUCLEOTIDE SEQUENCE [GENOMIC DNA]</scope>
    <source>
        <strain>168</strain>
    </source>
</reference>
<reference key="2">
    <citation type="journal article" date="1997" name="Nature">
        <title>The complete genome sequence of the Gram-positive bacterium Bacillus subtilis.</title>
        <authorList>
            <person name="Kunst F."/>
            <person name="Ogasawara N."/>
            <person name="Moszer I."/>
            <person name="Albertini A.M."/>
            <person name="Alloni G."/>
            <person name="Azevedo V."/>
            <person name="Bertero M.G."/>
            <person name="Bessieres P."/>
            <person name="Bolotin A."/>
            <person name="Borchert S."/>
            <person name="Borriss R."/>
            <person name="Boursier L."/>
            <person name="Brans A."/>
            <person name="Braun M."/>
            <person name="Brignell S.C."/>
            <person name="Bron S."/>
            <person name="Brouillet S."/>
            <person name="Bruschi C.V."/>
            <person name="Caldwell B."/>
            <person name="Capuano V."/>
            <person name="Carter N.M."/>
            <person name="Choi S.-K."/>
            <person name="Codani J.-J."/>
            <person name="Connerton I.F."/>
            <person name="Cummings N.J."/>
            <person name="Daniel R.A."/>
            <person name="Denizot F."/>
            <person name="Devine K.M."/>
            <person name="Duesterhoeft A."/>
            <person name="Ehrlich S.D."/>
            <person name="Emmerson P.T."/>
            <person name="Entian K.-D."/>
            <person name="Errington J."/>
            <person name="Fabret C."/>
            <person name="Ferrari E."/>
            <person name="Foulger D."/>
            <person name="Fritz C."/>
            <person name="Fujita M."/>
            <person name="Fujita Y."/>
            <person name="Fuma S."/>
            <person name="Galizzi A."/>
            <person name="Galleron N."/>
            <person name="Ghim S.-Y."/>
            <person name="Glaser P."/>
            <person name="Goffeau A."/>
            <person name="Golightly E.J."/>
            <person name="Grandi G."/>
            <person name="Guiseppi G."/>
            <person name="Guy B.J."/>
            <person name="Haga K."/>
            <person name="Haiech J."/>
            <person name="Harwood C.R."/>
            <person name="Henaut A."/>
            <person name="Hilbert H."/>
            <person name="Holsappel S."/>
            <person name="Hosono S."/>
            <person name="Hullo M.-F."/>
            <person name="Itaya M."/>
            <person name="Jones L.-M."/>
            <person name="Joris B."/>
            <person name="Karamata D."/>
            <person name="Kasahara Y."/>
            <person name="Klaerr-Blanchard M."/>
            <person name="Klein C."/>
            <person name="Kobayashi Y."/>
            <person name="Koetter P."/>
            <person name="Koningstein G."/>
            <person name="Krogh S."/>
            <person name="Kumano M."/>
            <person name="Kurita K."/>
            <person name="Lapidus A."/>
            <person name="Lardinois S."/>
            <person name="Lauber J."/>
            <person name="Lazarevic V."/>
            <person name="Lee S.-M."/>
            <person name="Levine A."/>
            <person name="Liu H."/>
            <person name="Masuda S."/>
            <person name="Mauel C."/>
            <person name="Medigue C."/>
            <person name="Medina N."/>
            <person name="Mellado R.P."/>
            <person name="Mizuno M."/>
            <person name="Moestl D."/>
            <person name="Nakai S."/>
            <person name="Noback M."/>
            <person name="Noone D."/>
            <person name="O'Reilly M."/>
            <person name="Ogawa K."/>
            <person name="Ogiwara A."/>
            <person name="Oudega B."/>
            <person name="Park S.-H."/>
            <person name="Parro V."/>
            <person name="Pohl T.M."/>
            <person name="Portetelle D."/>
            <person name="Porwollik S."/>
            <person name="Prescott A.M."/>
            <person name="Presecan E."/>
            <person name="Pujic P."/>
            <person name="Purnelle B."/>
            <person name="Rapoport G."/>
            <person name="Rey M."/>
            <person name="Reynolds S."/>
            <person name="Rieger M."/>
            <person name="Rivolta C."/>
            <person name="Rocha E."/>
            <person name="Roche B."/>
            <person name="Rose M."/>
            <person name="Sadaie Y."/>
            <person name="Sato T."/>
            <person name="Scanlan E."/>
            <person name="Schleich S."/>
            <person name="Schroeter R."/>
            <person name="Scoffone F."/>
            <person name="Sekiguchi J."/>
            <person name="Sekowska A."/>
            <person name="Seror S.J."/>
            <person name="Serror P."/>
            <person name="Shin B.-S."/>
            <person name="Soldo B."/>
            <person name="Sorokin A."/>
            <person name="Tacconi E."/>
            <person name="Takagi T."/>
            <person name="Takahashi H."/>
            <person name="Takemaru K."/>
            <person name="Takeuchi M."/>
            <person name="Tamakoshi A."/>
            <person name="Tanaka T."/>
            <person name="Terpstra P."/>
            <person name="Tognoni A."/>
            <person name="Tosato V."/>
            <person name="Uchiyama S."/>
            <person name="Vandenbol M."/>
            <person name="Vannier F."/>
            <person name="Vassarotti A."/>
            <person name="Viari A."/>
            <person name="Wambutt R."/>
            <person name="Wedler E."/>
            <person name="Wedler H."/>
            <person name="Weitzenegger T."/>
            <person name="Winters P."/>
            <person name="Wipat A."/>
            <person name="Yamamoto H."/>
            <person name="Yamane K."/>
            <person name="Yasumoto K."/>
            <person name="Yata K."/>
            <person name="Yoshida K."/>
            <person name="Yoshikawa H.-F."/>
            <person name="Zumstein E."/>
            <person name="Yoshikawa H."/>
            <person name="Danchin A."/>
        </authorList>
    </citation>
    <scope>NUCLEOTIDE SEQUENCE [LARGE SCALE GENOMIC DNA]</scope>
    <source>
        <strain>168</strain>
    </source>
</reference>
<reference key="3">
    <citation type="journal article" date="2004" name="FEMS Microbiol. Lett.">
        <title>Modulation of the K+ efflux activity of Bacillus subtilis YhaU by YhaT and the C-terminal region of YhaS.</title>
        <authorList>
            <person name="Fujisawa M."/>
            <person name="Wada Y."/>
            <person name="Ito M."/>
        </authorList>
    </citation>
    <scope>FUNCTION</scope>
    <scope>SUBCELLULAR LOCATION</scope>
    <scope>IDENTIFICATION OF THE KHTSTU OPERON</scope>
    <scope>INDUCTION</scope>
</reference>
<reference key="4">
    <citation type="journal article" date="2014" name="Mol. Microbiol.">
        <title>Methylglyoxal resistance in Bacillus subtilis: contributions of bacillithiol-dependent and independent pathways.</title>
        <authorList>
            <person name="Chandrangsu P."/>
            <person name="Dusi R."/>
            <person name="Hamilton C.J."/>
            <person name="Helmann J.D."/>
        </authorList>
    </citation>
    <scope>FUNCTION</scope>
</reference>
<dbReference type="EMBL" id="Y14080">
    <property type="protein sequence ID" value="CAA74440.1"/>
    <property type="molecule type" value="Genomic_DNA"/>
</dbReference>
<dbReference type="EMBL" id="AL009126">
    <property type="protein sequence ID" value="CAB12827.1"/>
    <property type="molecule type" value="Genomic_DNA"/>
</dbReference>
<dbReference type="PIR" id="E69819">
    <property type="entry name" value="E69819"/>
</dbReference>
<dbReference type="RefSeq" id="NP_388868.1">
    <property type="nucleotide sequence ID" value="NC_000964.3"/>
</dbReference>
<dbReference type="RefSeq" id="WP_010886463.1">
    <property type="nucleotide sequence ID" value="NZ_OZ025638.1"/>
</dbReference>
<dbReference type="SMR" id="O07534"/>
<dbReference type="FunCoup" id="O07534">
    <property type="interactions" value="32"/>
</dbReference>
<dbReference type="STRING" id="224308.BSU09870"/>
<dbReference type="PaxDb" id="224308-BSU09870"/>
<dbReference type="EnsemblBacteria" id="CAB12827">
    <property type="protein sequence ID" value="CAB12827"/>
    <property type="gene ID" value="BSU_09870"/>
</dbReference>
<dbReference type="GeneID" id="939291"/>
<dbReference type="KEGG" id="bsu:BSU09870"/>
<dbReference type="PATRIC" id="fig|224308.43.peg.1028"/>
<dbReference type="InParanoid" id="O07534"/>
<dbReference type="OrthoDB" id="2942440at2"/>
<dbReference type="BioCyc" id="BSUB:BSU09870-MONOMER"/>
<dbReference type="Proteomes" id="UP000001570">
    <property type="component" value="Chromosome"/>
</dbReference>
<dbReference type="GO" id="GO:0005886">
    <property type="term" value="C:plasma membrane"/>
    <property type="evidence" value="ECO:0007669"/>
    <property type="project" value="UniProtKB-SubCell"/>
</dbReference>